<organism>
    <name type="scientific">Glycine max</name>
    <name type="common">Soybean</name>
    <name type="synonym">Glycine hispida</name>
    <dbReference type="NCBI Taxonomy" id="3847"/>
    <lineage>
        <taxon>Eukaryota</taxon>
        <taxon>Viridiplantae</taxon>
        <taxon>Streptophyta</taxon>
        <taxon>Embryophyta</taxon>
        <taxon>Tracheophyta</taxon>
        <taxon>Spermatophyta</taxon>
        <taxon>Magnoliopsida</taxon>
        <taxon>eudicotyledons</taxon>
        <taxon>Gunneridae</taxon>
        <taxon>Pentapetalae</taxon>
        <taxon>rosids</taxon>
        <taxon>fabids</taxon>
        <taxon>Fabales</taxon>
        <taxon>Fabaceae</taxon>
        <taxon>Papilionoideae</taxon>
        <taxon>50 kb inversion clade</taxon>
        <taxon>NPAAA clade</taxon>
        <taxon>indigoferoid/millettioid clade</taxon>
        <taxon>Phaseoleae</taxon>
        <taxon>Glycine</taxon>
        <taxon>Glycine subgen. Soja</taxon>
    </lineage>
</organism>
<proteinExistence type="evidence at transcript level"/>
<feature type="chain" id="PRO_0000213734" description="Early nodulin-36B">
    <location>
        <begin position="1" status="less than"/>
        <end position="93"/>
    </location>
</feature>
<feature type="sequence conflict" description="In Ref. 2; CAA48906/CAA48907." evidence="1" ref="2">
    <original>I</original>
    <variation>S</variation>
    <location>
        <position position="74"/>
    </location>
</feature>
<feature type="non-terminal residue">
    <location>
        <position position="1"/>
    </location>
</feature>
<sequence length="93" mass="10676">EERVLTPHTPSLKTVCFGLALASLINKGCVLTFFLEWRKQIHILRRRRGLATAWQTGKSQKRQWTPLGSLWLCIAHVVLLAVECNNKQSWSSF</sequence>
<comment type="developmental stage">
    <text>Expressed at early stages of nodule development.</text>
</comment>
<protein>
    <recommendedName>
        <fullName>Early nodulin-36B</fullName>
        <shortName>N-36B</shortName>
    </recommendedName>
</protein>
<keyword id="KW-0536">Nodulation</keyword>
<keyword id="KW-1185">Reference proteome</keyword>
<dbReference type="EMBL" id="D13504">
    <property type="protein sequence ID" value="BAA02722.1"/>
    <property type="molecule type" value="mRNA"/>
</dbReference>
<dbReference type="EMBL" id="X69154">
    <property type="protein sequence ID" value="CAA48906.1"/>
    <property type="molecule type" value="mRNA"/>
</dbReference>
<dbReference type="EMBL" id="X69155">
    <property type="protein sequence ID" value="CAA48907.1"/>
    <property type="molecule type" value="mRNA"/>
</dbReference>
<dbReference type="PIR" id="S34799">
    <property type="entry name" value="S34799"/>
</dbReference>
<dbReference type="InParanoid" id="Q02919"/>
<dbReference type="Proteomes" id="UP000008827">
    <property type="component" value="Unplaced"/>
</dbReference>
<dbReference type="GO" id="GO:0009877">
    <property type="term" value="P:nodulation"/>
    <property type="evidence" value="ECO:0007669"/>
    <property type="project" value="UniProtKB-KW"/>
</dbReference>
<accession>Q02919</accession>
<accession>Q02995</accession>
<accession>Q02996</accession>
<reference key="1">
    <citation type="journal article" date="1993" name="Mol. Gen. Genet.">
        <title>Isolation and characterization of novel nodulin cDNAs representing genes expressed at early stages of soybean nodule development.</title>
        <authorList>
            <person name="Kouchi H."/>
            <person name="Hata S."/>
        </authorList>
    </citation>
    <scope>NUCLEOTIDE SEQUENCE [MRNA]</scope>
    <source>
        <strain>cv. Akisengoku</strain>
    </source>
</reference>
<reference key="2">
    <citation type="journal article" date="1993" name="Plant J.">
        <title>Characterization of GmENOD40, a gene showing novel patterns of cell-specific expression during soybean nodule development.</title>
        <authorList>
            <person name="Yang W.C."/>
            <person name="Katinakis P."/>
            <person name="Hendriks P."/>
            <person name="Smolders A."/>
            <person name="de Vries F."/>
            <person name="Spee J."/>
            <person name="van Kammen A."/>
            <person name="Bisseling T."/>
            <person name="Franssen H."/>
        </authorList>
    </citation>
    <scope>NUCLEOTIDE SEQUENCE [MRNA]</scope>
    <source>
        <strain>cv. Evans</strain>
        <strain>cv. Williams</strain>
    </source>
</reference>
<name>NO36B_SOYBN</name>
<evidence type="ECO:0000305" key="1"/>